<dbReference type="EMBL" id="U00096">
    <property type="protein sequence ID" value="QNV50527.1"/>
    <property type="molecule type" value="Genomic_DNA"/>
</dbReference>
<dbReference type="InParanoid" id="P0DSF2"/>
<dbReference type="BioCyc" id="EcoCyc:MONOMER0-4486"/>
<dbReference type="Proteomes" id="UP000000625">
    <property type="component" value="Chromosome"/>
</dbReference>
<comment type="induction">
    <text evidence="1">Expressed in both exponential and stationary phase in rich medium (at protein level).</text>
</comment>
<evidence type="ECO:0000269" key="1">
    <source>
    </source>
</evidence>
<evidence type="ECO:0000303" key="2">
    <source>
    </source>
</evidence>
<evidence type="ECO:0000312" key="3">
    <source>
        <dbReference type="EMBL" id="QNV50527.1"/>
    </source>
</evidence>
<proteinExistence type="evidence at protein level"/>
<keyword id="KW-1185">Reference proteome</keyword>
<name>YNCP_ECOLI</name>
<protein>
    <recommendedName>
        <fullName evidence="2">Protein YncP</fullName>
    </recommendedName>
</protein>
<reference key="1">
    <citation type="journal article" date="1997" name="Science">
        <title>The complete genome sequence of Escherichia coli K-12.</title>
        <authorList>
            <person name="Blattner F.R."/>
            <person name="Plunkett G. III"/>
            <person name="Bloch C.A."/>
            <person name="Perna N.T."/>
            <person name="Burland V."/>
            <person name="Riley M."/>
            <person name="Collado-Vides J."/>
            <person name="Glasner J.D."/>
            <person name="Rode C.K."/>
            <person name="Mayhew G.F."/>
            <person name="Gregor J."/>
            <person name="Davis N.W."/>
            <person name="Kirkpatrick H.A."/>
            <person name="Goeden M.A."/>
            <person name="Rose D.J."/>
            <person name="Mau B."/>
            <person name="Shao Y."/>
        </authorList>
    </citation>
    <scope>NUCLEOTIDE SEQUENCE [LARGE SCALE GENOMIC DNA]</scope>
    <source>
        <strain>K12 / MG1655 / ATCC 47076</strain>
    </source>
</reference>
<reference key="2">
    <citation type="journal article" date="2019" name="MBio">
        <title>Identifying small proteins by ribosome profiling with stalled initiation complexes.</title>
        <authorList>
            <person name="Weaver J."/>
            <person name="Mohammad F."/>
            <person name="Buskirk A.R."/>
            <person name="Storz G."/>
        </authorList>
    </citation>
    <scope>IDENTIFICATION</scope>
    <scope>INDUCTION</scope>
    <source>
        <strain>K12 / MG1655 / ATCC 47076</strain>
    </source>
</reference>
<gene>
    <name evidence="2" type="primary">yncP</name>
    <name evidence="3" type="ordered locus">b4774</name>
</gene>
<feature type="chain" id="PRO_0000447158" description="Protein YncP">
    <location>
        <begin position="1"/>
        <end position="22"/>
    </location>
</feature>
<organism>
    <name type="scientific">Escherichia coli (strain K12)</name>
    <dbReference type="NCBI Taxonomy" id="83333"/>
    <lineage>
        <taxon>Bacteria</taxon>
        <taxon>Pseudomonadati</taxon>
        <taxon>Pseudomonadota</taxon>
        <taxon>Gammaproteobacteria</taxon>
        <taxon>Enterobacterales</taxon>
        <taxon>Enterobacteriaceae</taxon>
        <taxon>Escherichia</taxon>
    </lineage>
</organism>
<sequence length="22" mass="2400">MNLLVKCAGKIPALALTWTCRP</sequence>
<accession>P0DSF2</accession>
<accession>A0A7H2C780</accession>